<name>IF2_RHILO</name>
<gene>
    <name evidence="2" type="primary">infB</name>
    <name type="ordered locus">mlr5554</name>
</gene>
<proteinExistence type="inferred from homology"/>
<organism>
    <name type="scientific">Mesorhizobium japonicum (strain LMG 29417 / CECT 9101 / MAFF 303099)</name>
    <name type="common">Mesorhizobium loti (strain MAFF 303099)</name>
    <dbReference type="NCBI Taxonomy" id="266835"/>
    <lineage>
        <taxon>Bacteria</taxon>
        <taxon>Pseudomonadati</taxon>
        <taxon>Pseudomonadota</taxon>
        <taxon>Alphaproteobacteria</taxon>
        <taxon>Hyphomicrobiales</taxon>
        <taxon>Phyllobacteriaceae</taxon>
        <taxon>Mesorhizobium</taxon>
    </lineage>
</organism>
<feature type="chain" id="PRO_0000137240" description="Translation initiation factor IF-2">
    <location>
        <begin position="1"/>
        <end position="860"/>
    </location>
</feature>
<feature type="domain" description="tr-type G">
    <location>
        <begin position="358"/>
        <end position="525"/>
    </location>
</feature>
<feature type="region of interest" description="Disordered" evidence="3">
    <location>
        <begin position="1"/>
        <end position="265"/>
    </location>
</feature>
<feature type="region of interest" description="G1" evidence="1">
    <location>
        <begin position="367"/>
        <end position="374"/>
    </location>
</feature>
<feature type="region of interest" description="G2" evidence="1">
    <location>
        <begin position="392"/>
        <end position="396"/>
    </location>
</feature>
<feature type="region of interest" description="G3" evidence="1">
    <location>
        <begin position="413"/>
        <end position="416"/>
    </location>
</feature>
<feature type="region of interest" description="G4" evidence="1">
    <location>
        <begin position="467"/>
        <end position="470"/>
    </location>
</feature>
<feature type="region of interest" description="G5" evidence="1">
    <location>
        <begin position="503"/>
        <end position="505"/>
    </location>
</feature>
<feature type="compositionally biased region" description="Basic and acidic residues" evidence="3">
    <location>
        <begin position="1"/>
        <end position="11"/>
    </location>
</feature>
<feature type="compositionally biased region" description="Low complexity" evidence="3">
    <location>
        <begin position="79"/>
        <end position="88"/>
    </location>
</feature>
<feature type="compositionally biased region" description="Basic and acidic residues" evidence="3">
    <location>
        <begin position="110"/>
        <end position="183"/>
    </location>
</feature>
<feature type="binding site" evidence="2">
    <location>
        <begin position="367"/>
        <end position="374"/>
    </location>
    <ligand>
        <name>GTP</name>
        <dbReference type="ChEBI" id="CHEBI:37565"/>
    </ligand>
</feature>
<feature type="binding site" evidence="2">
    <location>
        <begin position="413"/>
        <end position="417"/>
    </location>
    <ligand>
        <name>GTP</name>
        <dbReference type="ChEBI" id="CHEBI:37565"/>
    </ligand>
</feature>
<feature type="binding site" evidence="2">
    <location>
        <begin position="467"/>
        <end position="470"/>
    </location>
    <ligand>
        <name>GTP</name>
        <dbReference type="ChEBI" id="CHEBI:37565"/>
    </ligand>
</feature>
<accession>Q98BI8</accession>
<sequence>MSDTKSGDDKTLSVTPMKTLTLKRPGMEQGTVRQNFSHGRTKSVVVETKKRKFSLPGDKPEPAAAAPVPVFTPKPPVAAAPVVQEAPKAAPPPPPRAPVERSGMVLNELSRSEMEARRRALEGSKVREVEDRQRAAEEAKRRAEDEERRKREREESARRQAEEEARLQAEAESRRRAEEEARRRAPLAAELATADEEEEVKPKRAGAGAPVRRLVTPEVARPAKPTKGEEDRRRGKLTLNSALSDEDARARSLSSMRRRQEKFKRAMHNEPREKVMREVILPETITIQELAQRMSERAVDVVKFFMKQGQILKPGDVIDADTAELVATEFGHTVRRVAESDIEEGLFNIADNAEDLVPRPPVVTIMGHVDHGKTSLLDAIRNANVVSGEAGGITQHIGAYQVEKNGQKITFIDTPGHAAFTAMRARGAQATDIAILVVAADDSVMPQTIESISHAKAAGVPIIVAINKIDKHDADPQKVRSELLRHEVFVESMGGEVLDVEVSATKGTNLDKLLEAILLQAEILDLKANPDRTAEGVVIEAQLDKGRGPVATVLVQTGTLMPGDILVAGNEWGRVRALVNDRGEQIKEAPPAMPVEVLGLQGTPLAGDRFAVVNNEARAREITEYRQRLAREKAVAKHAGQRGSLEQMMSQLQTSGLKEFPLVIKGDVQGSIEAINAALDKLGTDEVRARIVHAGAGAITESDVSLAETSGAAIIGFNVRANVQARAAAAAAGIEIRYYSIIYNLVDDVKAALSGLLSPERRETFIGNAEILEIFDITKVGKIAGCRVTEGKVERGAGVRLIRDNVVIHEGTLKTLKRFKDEVSEVPGGQECGMAFQNYEDMRVGDIIECFRVEMVTRTL</sequence>
<keyword id="KW-0963">Cytoplasm</keyword>
<keyword id="KW-0342">GTP-binding</keyword>
<keyword id="KW-0396">Initiation factor</keyword>
<keyword id="KW-0547">Nucleotide-binding</keyword>
<keyword id="KW-0648">Protein biosynthesis</keyword>
<dbReference type="EMBL" id="BA000012">
    <property type="protein sequence ID" value="BAB51984.1"/>
    <property type="molecule type" value="Genomic_DNA"/>
</dbReference>
<dbReference type="RefSeq" id="WP_010913322.1">
    <property type="nucleotide sequence ID" value="NC_002678.2"/>
</dbReference>
<dbReference type="SMR" id="Q98BI8"/>
<dbReference type="KEGG" id="mlo:mlr5554"/>
<dbReference type="PATRIC" id="fig|266835.9.peg.4416"/>
<dbReference type="eggNOG" id="COG0532">
    <property type="taxonomic scope" value="Bacteria"/>
</dbReference>
<dbReference type="HOGENOM" id="CLU_006301_6_0_5"/>
<dbReference type="Proteomes" id="UP000000552">
    <property type="component" value="Chromosome"/>
</dbReference>
<dbReference type="GO" id="GO:0005829">
    <property type="term" value="C:cytosol"/>
    <property type="evidence" value="ECO:0007669"/>
    <property type="project" value="TreeGrafter"/>
</dbReference>
<dbReference type="GO" id="GO:0005525">
    <property type="term" value="F:GTP binding"/>
    <property type="evidence" value="ECO:0007669"/>
    <property type="project" value="UniProtKB-KW"/>
</dbReference>
<dbReference type="GO" id="GO:0003924">
    <property type="term" value="F:GTPase activity"/>
    <property type="evidence" value="ECO:0007669"/>
    <property type="project" value="UniProtKB-UniRule"/>
</dbReference>
<dbReference type="GO" id="GO:0097216">
    <property type="term" value="F:guanosine tetraphosphate binding"/>
    <property type="evidence" value="ECO:0007669"/>
    <property type="project" value="UniProtKB-ARBA"/>
</dbReference>
<dbReference type="GO" id="GO:0003743">
    <property type="term" value="F:translation initiation factor activity"/>
    <property type="evidence" value="ECO:0007669"/>
    <property type="project" value="UniProtKB-UniRule"/>
</dbReference>
<dbReference type="CDD" id="cd01887">
    <property type="entry name" value="IF2_eIF5B"/>
    <property type="match status" value="1"/>
</dbReference>
<dbReference type="CDD" id="cd03702">
    <property type="entry name" value="IF2_mtIF2_II"/>
    <property type="match status" value="1"/>
</dbReference>
<dbReference type="CDD" id="cd03692">
    <property type="entry name" value="mtIF2_IVc"/>
    <property type="match status" value="1"/>
</dbReference>
<dbReference type="FunFam" id="2.40.30.10:FF:000007">
    <property type="entry name" value="Translation initiation factor IF-2"/>
    <property type="match status" value="1"/>
</dbReference>
<dbReference type="FunFam" id="2.40.30.10:FF:000008">
    <property type="entry name" value="Translation initiation factor IF-2"/>
    <property type="match status" value="1"/>
</dbReference>
<dbReference type="FunFam" id="3.40.50.10050:FF:000001">
    <property type="entry name" value="Translation initiation factor IF-2"/>
    <property type="match status" value="1"/>
</dbReference>
<dbReference type="FunFam" id="3.40.50.300:FF:000019">
    <property type="entry name" value="Translation initiation factor IF-2"/>
    <property type="match status" value="1"/>
</dbReference>
<dbReference type="Gene3D" id="3.40.50.300">
    <property type="entry name" value="P-loop containing nucleotide triphosphate hydrolases"/>
    <property type="match status" value="1"/>
</dbReference>
<dbReference type="Gene3D" id="2.40.30.10">
    <property type="entry name" value="Translation factors"/>
    <property type="match status" value="2"/>
</dbReference>
<dbReference type="Gene3D" id="3.40.50.10050">
    <property type="entry name" value="Translation initiation factor IF- 2, domain 3"/>
    <property type="match status" value="1"/>
</dbReference>
<dbReference type="HAMAP" id="MF_00100_B">
    <property type="entry name" value="IF_2_B"/>
    <property type="match status" value="1"/>
</dbReference>
<dbReference type="InterPro" id="IPR053905">
    <property type="entry name" value="EF-G-like_DII"/>
</dbReference>
<dbReference type="InterPro" id="IPR004161">
    <property type="entry name" value="EFTu-like_2"/>
</dbReference>
<dbReference type="InterPro" id="IPR013575">
    <property type="entry name" value="IF2_assoc_dom_bac"/>
</dbReference>
<dbReference type="InterPro" id="IPR044145">
    <property type="entry name" value="IF2_II"/>
</dbReference>
<dbReference type="InterPro" id="IPR006847">
    <property type="entry name" value="IF2_N"/>
</dbReference>
<dbReference type="InterPro" id="IPR027417">
    <property type="entry name" value="P-loop_NTPase"/>
</dbReference>
<dbReference type="InterPro" id="IPR005225">
    <property type="entry name" value="Small_GTP-bd"/>
</dbReference>
<dbReference type="InterPro" id="IPR000795">
    <property type="entry name" value="T_Tr_GTP-bd_dom"/>
</dbReference>
<dbReference type="InterPro" id="IPR000178">
    <property type="entry name" value="TF_IF2_bacterial-like"/>
</dbReference>
<dbReference type="InterPro" id="IPR015760">
    <property type="entry name" value="TIF_IF2"/>
</dbReference>
<dbReference type="InterPro" id="IPR023115">
    <property type="entry name" value="TIF_IF2_dom3"/>
</dbReference>
<dbReference type="InterPro" id="IPR036925">
    <property type="entry name" value="TIF_IF2_dom3_sf"/>
</dbReference>
<dbReference type="InterPro" id="IPR009000">
    <property type="entry name" value="Transl_B-barrel_sf"/>
</dbReference>
<dbReference type="NCBIfam" id="TIGR00487">
    <property type="entry name" value="IF-2"/>
    <property type="match status" value="1"/>
</dbReference>
<dbReference type="NCBIfam" id="TIGR00231">
    <property type="entry name" value="small_GTP"/>
    <property type="match status" value="1"/>
</dbReference>
<dbReference type="PANTHER" id="PTHR43381:SF5">
    <property type="entry name" value="TR-TYPE G DOMAIN-CONTAINING PROTEIN"/>
    <property type="match status" value="1"/>
</dbReference>
<dbReference type="PANTHER" id="PTHR43381">
    <property type="entry name" value="TRANSLATION INITIATION FACTOR IF-2-RELATED"/>
    <property type="match status" value="1"/>
</dbReference>
<dbReference type="Pfam" id="PF22042">
    <property type="entry name" value="EF-G_D2"/>
    <property type="match status" value="1"/>
</dbReference>
<dbReference type="Pfam" id="PF00009">
    <property type="entry name" value="GTP_EFTU"/>
    <property type="match status" value="1"/>
</dbReference>
<dbReference type="Pfam" id="PF03144">
    <property type="entry name" value="GTP_EFTU_D2"/>
    <property type="match status" value="1"/>
</dbReference>
<dbReference type="Pfam" id="PF11987">
    <property type="entry name" value="IF-2"/>
    <property type="match status" value="1"/>
</dbReference>
<dbReference type="Pfam" id="PF08364">
    <property type="entry name" value="IF2_assoc"/>
    <property type="match status" value="1"/>
</dbReference>
<dbReference type="Pfam" id="PF04760">
    <property type="entry name" value="IF2_N"/>
    <property type="match status" value="1"/>
</dbReference>
<dbReference type="SUPFAM" id="SSF52156">
    <property type="entry name" value="Initiation factor IF2/eIF5b, domain 3"/>
    <property type="match status" value="1"/>
</dbReference>
<dbReference type="SUPFAM" id="SSF52540">
    <property type="entry name" value="P-loop containing nucleoside triphosphate hydrolases"/>
    <property type="match status" value="1"/>
</dbReference>
<dbReference type="SUPFAM" id="SSF50447">
    <property type="entry name" value="Translation proteins"/>
    <property type="match status" value="2"/>
</dbReference>
<dbReference type="PROSITE" id="PS51722">
    <property type="entry name" value="G_TR_2"/>
    <property type="match status" value="1"/>
</dbReference>
<dbReference type="PROSITE" id="PS01176">
    <property type="entry name" value="IF2"/>
    <property type="match status" value="1"/>
</dbReference>
<evidence type="ECO:0000250" key="1"/>
<evidence type="ECO:0000255" key="2">
    <source>
        <dbReference type="HAMAP-Rule" id="MF_00100"/>
    </source>
</evidence>
<evidence type="ECO:0000256" key="3">
    <source>
        <dbReference type="SAM" id="MobiDB-lite"/>
    </source>
</evidence>
<reference key="1">
    <citation type="journal article" date="2000" name="DNA Res.">
        <title>Complete genome structure of the nitrogen-fixing symbiotic bacterium Mesorhizobium loti.</title>
        <authorList>
            <person name="Kaneko T."/>
            <person name="Nakamura Y."/>
            <person name="Sato S."/>
            <person name="Asamizu E."/>
            <person name="Kato T."/>
            <person name="Sasamoto S."/>
            <person name="Watanabe A."/>
            <person name="Idesawa K."/>
            <person name="Ishikawa A."/>
            <person name="Kawashima K."/>
            <person name="Kimura T."/>
            <person name="Kishida Y."/>
            <person name="Kiyokawa C."/>
            <person name="Kohara M."/>
            <person name="Matsumoto M."/>
            <person name="Matsuno A."/>
            <person name="Mochizuki Y."/>
            <person name="Nakayama S."/>
            <person name="Nakazaki N."/>
            <person name="Shimpo S."/>
            <person name="Sugimoto M."/>
            <person name="Takeuchi C."/>
            <person name="Yamada M."/>
            <person name="Tabata S."/>
        </authorList>
    </citation>
    <scope>NUCLEOTIDE SEQUENCE [LARGE SCALE GENOMIC DNA]</scope>
    <source>
        <strain>LMG 29417 / CECT 9101 / MAFF 303099</strain>
    </source>
</reference>
<protein>
    <recommendedName>
        <fullName evidence="2">Translation initiation factor IF-2</fullName>
    </recommendedName>
</protein>
<comment type="function">
    <text evidence="2">One of the essential components for the initiation of protein synthesis. Protects formylmethionyl-tRNA from spontaneous hydrolysis and promotes its binding to the 30S ribosomal subunits. Also involved in the hydrolysis of GTP during the formation of the 70S ribosomal complex.</text>
</comment>
<comment type="subcellular location">
    <subcellularLocation>
        <location evidence="2">Cytoplasm</location>
    </subcellularLocation>
</comment>
<comment type="similarity">
    <text evidence="2">Belongs to the TRAFAC class translation factor GTPase superfamily. Classic translation factor GTPase family. IF-2 subfamily.</text>
</comment>